<proteinExistence type="inferred from homology"/>
<name>RSMA_UREPA</name>
<keyword id="KW-0963">Cytoplasm</keyword>
<keyword id="KW-0489">Methyltransferase</keyword>
<keyword id="KW-1185">Reference proteome</keyword>
<keyword id="KW-0694">RNA-binding</keyword>
<keyword id="KW-0698">rRNA processing</keyword>
<keyword id="KW-0949">S-adenosyl-L-methionine</keyword>
<keyword id="KW-0808">Transferase</keyword>
<evidence type="ECO:0000255" key="1">
    <source>
        <dbReference type="HAMAP-Rule" id="MF_00607"/>
    </source>
</evidence>
<evidence type="ECO:0000305" key="2"/>
<protein>
    <recommendedName>
        <fullName evidence="1">Ribosomal RNA small subunit methyltransferase A</fullName>
        <ecNumber evidence="1">2.1.1.182</ecNumber>
    </recommendedName>
    <alternativeName>
        <fullName evidence="1">16S rRNA (adenine(1518)-N(6)/adenine(1519)-N(6))-dimethyltransferase</fullName>
    </alternativeName>
    <alternativeName>
        <fullName evidence="1">16S rRNA dimethyladenosine transferase</fullName>
    </alternativeName>
    <alternativeName>
        <fullName evidence="1">16S rRNA dimethylase</fullName>
    </alternativeName>
    <alternativeName>
        <fullName evidence="1">S-adenosylmethionine-6-N', N'-adenosyl(rRNA) dimethyltransferase</fullName>
    </alternativeName>
</protein>
<dbReference type="EC" id="2.1.1.182" evidence="1"/>
<dbReference type="EMBL" id="AF222894">
    <property type="protein sequence ID" value="AAF31015.1"/>
    <property type="status" value="ALT_INIT"/>
    <property type="molecule type" value="Genomic_DNA"/>
</dbReference>
<dbReference type="PIR" id="E82871">
    <property type="entry name" value="E82871"/>
</dbReference>
<dbReference type="RefSeq" id="WP_006688630.1">
    <property type="nucleotide sequence ID" value="NC_002162.1"/>
</dbReference>
<dbReference type="SMR" id="Q9PPN8"/>
<dbReference type="STRING" id="273119.UU601"/>
<dbReference type="EnsemblBacteria" id="AAF31015">
    <property type="protein sequence ID" value="AAF31015"/>
    <property type="gene ID" value="UU601"/>
</dbReference>
<dbReference type="GeneID" id="29672343"/>
<dbReference type="KEGG" id="uur:UU601"/>
<dbReference type="eggNOG" id="COG0030">
    <property type="taxonomic scope" value="Bacteria"/>
</dbReference>
<dbReference type="HOGENOM" id="CLU_041220_0_1_14"/>
<dbReference type="OrthoDB" id="9814755at2"/>
<dbReference type="Proteomes" id="UP000000423">
    <property type="component" value="Chromosome"/>
</dbReference>
<dbReference type="GO" id="GO:0005829">
    <property type="term" value="C:cytosol"/>
    <property type="evidence" value="ECO:0007669"/>
    <property type="project" value="TreeGrafter"/>
</dbReference>
<dbReference type="GO" id="GO:0052908">
    <property type="term" value="F:16S rRNA (adenine(1518)-N(6)/adenine(1519)-N(6))-dimethyltransferase activity"/>
    <property type="evidence" value="ECO:0007669"/>
    <property type="project" value="UniProtKB-EC"/>
</dbReference>
<dbReference type="GO" id="GO:0003723">
    <property type="term" value="F:RNA binding"/>
    <property type="evidence" value="ECO:0007669"/>
    <property type="project" value="UniProtKB-KW"/>
</dbReference>
<dbReference type="Gene3D" id="1.10.8.100">
    <property type="entry name" value="Ribosomal RNA adenine dimethylase-like, domain 2"/>
    <property type="match status" value="1"/>
</dbReference>
<dbReference type="Gene3D" id="3.40.50.150">
    <property type="entry name" value="Vaccinia Virus protein VP39"/>
    <property type="match status" value="1"/>
</dbReference>
<dbReference type="HAMAP" id="MF_00607">
    <property type="entry name" value="16SrRNA_methyltr_A"/>
    <property type="match status" value="1"/>
</dbReference>
<dbReference type="InterPro" id="IPR001737">
    <property type="entry name" value="KsgA/Erm"/>
</dbReference>
<dbReference type="InterPro" id="IPR023165">
    <property type="entry name" value="rRNA_Ade_diMease-like_C"/>
</dbReference>
<dbReference type="InterPro" id="IPR020596">
    <property type="entry name" value="rRNA_Ade_Mease_Trfase_CS"/>
</dbReference>
<dbReference type="InterPro" id="IPR020598">
    <property type="entry name" value="rRNA_Ade_methylase_Trfase_N"/>
</dbReference>
<dbReference type="InterPro" id="IPR011530">
    <property type="entry name" value="rRNA_adenine_dimethylase"/>
</dbReference>
<dbReference type="InterPro" id="IPR029063">
    <property type="entry name" value="SAM-dependent_MTases_sf"/>
</dbReference>
<dbReference type="NCBIfam" id="TIGR00755">
    <property type="entry name" value="ksgA"/>
    <property type="match status" value="1"/>
</dbReference>
<dbReference type="PANTHER" id="PTHR11727">
    <property type="entry name" value="DIMETHYLADENOSINE TRANSFERASE"/>
    <property type="match status" value="1"/>
</dbReference>
<dbReference type="PANTHER" id="PTHR11727:SF7">
    <property type="entry name" value="DIMETHYLADENOSINE TRANSFERASE-RELATED"/>
    <property type="match status" value="1"/>
</dbReference>
<dbReference type="Pfam" id="PF00398">
    <property type="entry name" value="RrnaAD"/>
    <property type="match status" value="1"/>
</dbReference>
<dbReference type="SMART" id="SM00650">
    <property type="entry name" value="rADc"/>
    <property type="match status" value="1"/>
</dbReference>
<dbReference type="SUPFAM" id="SSF53335">
    <property type="entry name" value="S-adenosyl-L-methionine-dependent methyltransferases"/>
    <property type="match status" value="1"/>
</dbReference>
<dbReference type="PROSITE" id="PS01131">
    <property type="entry name" value="RRNA_A_DIMETH"/>
    <property type="match status" value="1"/>
</dbReference>
<dbReference type="PROSITE" id="PS51689">
    <property type="entry name" value="SAM_RNA_A_N6_MT"/>
    <property type="match status" value="1"/>
</dbReference>
<comment type="function">
    <text evidence="1">Specifically dimethylates two adjacent adenosines (A1518 and A1519) in the loop of a conserved hairpin near the 3'-end of 16S rRNA in the 30S particle. May play a critical role in biogenesis of 30S subunits.</text>
</comment>
<comment type="catalytic activity">
    <reaction evidence="1">
        <text>adenosine(1518)/adenosine(1519) in 16S rRNA + 4 S-adenosyl-L-methionine = N(6)-dimethyladenosine(1518)/N(6)-dimethyladenosine(1519) in 16S rRNA + 4 S-adenosyl-L-homocysteine + 4 H(+)</text>
        <dbReference type="Rhea" id="RHEA:19609"/>
        <dbReference type="Rhea" id="RHEA-COMP:10232"/>
        <dbReference type="Rhea" id="RHEA-COMP:10233"/>
        <dbReference type="ChEBI" id="CHEBI:15378"/>
        <dbReference type="ChEBI" id="CHEBI:57856"/>
        <dbReference type="ChEBI" id="CHEBI:59789"/>
        <dbReference type="ChEBI" id="CHEBI:74411"/>
        <dbReference type="ChEBI" id="CHEBI:74493"/>
        <dbReference type="EC" id="2.1.1.182"/>
    </reaction>
</comment>
<comment type="subcellular location">
    <subcellularLocation>
        <location evidence="1">Cytoplasm</location>
    </subcellularLocation>
</comment>
<comment type="similarity">
    <text evidence="1">Belongs to the class I-like SAM-binding methyltransferase superfamily. rRNA adenine N(6)-methyltransferase family. RsmA subfamily.</text>
</comment>
<comment type="sequence caution" evidence="2">
    <conflict type="erroneous initiation">
        <sequence resource="EMBL-CDS" id="AAF31015"/>
    </conflict>
</comment>
<accession>Q9PPN8</accession>
<gene>
    <name evidence="1" type="primary">rsmA</name>
    <name evidence="1" type="synonym">ksgA</name>
    <name type="ordered locus">UU601</name>
</gene>
<feature type="chain" id="PRO_0000101635" description="Ribosomal RNA small subunit methyltransferase A">
    <location>
        <begin position="1"/>
        <end position="277"/>
    </location>
</feature>
<feature type="binding site" evidence="1">
    <location>
        <position position="24"/>
    </location>
    <ligand>
        <name>S-adenosyl-L-methionine</name>
        <dbReference type="ChEBI" id="CHEBI:59789"/>
    </ligand>
</feature>
<feature type="binding site" evidence="1">
    <location>
        <position position="26"/>
    </location>
    <ligand>
        <name>S-adenosyl-L-methionine</name>
        <dbReference type="ChEBI" id="CHEBI:59789"/>
    </ligand>
</feature>
<feature type="binding site" evidence="1">
    <location>
        <position position="51"/>
    </location>
    <ligand>
        <name>S-adenosyl-L-methionine</name>
        <dbReference type="ChEBI" id="CHEBI:59789"/>
    </ligand>
</feature>
<feature type="binding site" evidence="1">
    <location>
        <position position="72"/>
    </location>
    <ligand>
        <name>S-adenosyl-L-methionine</name>
        <dbReference type="ChEBI" id="CHEBI:59789"/>
    </ligand>
</feature>
<feature type="binding site" evidence="1">
    <location>
        <position position="96"/>
    </location>
    <ligand>
        <name>S-adenosyl-L-methionine</name>
        <dbReference type="ChEBI" id="CHEBI:59789"/>
    </ligand>
</feature>
<feature type="binding site" evidence="1">
    <location>
        <position position="123"/>
    </location>
    <ligand>
        <name>S-adenosyl-L-methionine</name>
        <dbReference type="ChEBI" id="CHEBI:59789"/>
    </ligand>
</feature>
<reference key="1">
    <citation type="journal article" date="2000" name="Nature">
        <title>The complete sequence of the mucosal pathogen Ureaplasma urealyticum.</title>
        <authorList>
            <person name="Glass J.I."/>
            <person name="Lefkowitz E.J."/>
            <person name="Glass J.S."/>
            <person name="Heiner C.R."/>
            <person name="Chen E.Y."/>
            <person name="Cassell G.H."/>
        </authorList>
    </citation>
    <scope>NUCLEOTIDE SEQUENCE [LARGE SCALE GENOMIC DNA]</scope>
    <source>
        <strain>ATCC 700970</strain>
    </source>
</reference>
<sequence>MNKSFIKNKLKQESFVPSKKMGQNFLLSNNIKNKIVDVANINKDDLILEIGPGWGAITEILVQKTNILIAIELDKRLYAHLKTYIKTSNFHIINNDVLCVDLDNLILDYNNTQKIQKIKVVANLPYAISSKIVLKIIQSKLINDAYIMVQKEMAERIGAKVNTRGYNAFTVLVQLFCKTKILFEVNAKEFHPQPKVQSAVIHLENLHNSVNFNIEELGKFLRICFLNKRKKLKNNLSNIYDIKIINQMFIDYNLDMNLRAENIEPKMFLKLFNYLNR</sequence>
<organism>
    <name type="scientific">Ureaplasma parvum serovar 3 (strain ATCC 700970)</name>
    <dbReference type="NCBI Taxonomy" id="273119"/>
    <lineage>
        <taxon>Bacteria</taxon>
        <taxon>Bacillati</taxon>
        <taxon>Mycoplasmatota</taxon>
        <taxon>Mycoplasmoidales</taxon>
        <taxon>Mycoplasmoidaceae</taxon>
        <taxon>Ureaplasma</taxon>
    </lineage>
</organism>